<name>CYSG2_AERHH</name>
<gene>
    <name evidence="1" type="primary">cysG2</name>
    <name type="ordered locus">AHA_3568</name>
</gene>
<feature type="chain" id="PRO_0000330487" description="Siroheme synthase 2">
    <location>
        <begin position="1"/>
        <end position="470"/>
    </location>
</feature>
<feature type="region of interest" description="Precorrin-2 dehydrogenase /sirohydrochlorin ferrochelatase" evidence="1">
    <location>
        <begin position="1"/>
        <end position="202"/>
    </location>
</feature>
<feature type="region of interest" description="Uroporphyrinogen-III C-methyltransferase" evidence="1">
    <location>
        <begin position="214"/>
        <end position="470"/>
    </location>
</feature>
<feature type="active site" description="Proton acceptor" evidence="1">
    <location>
        <position position="246"/>
    </location>
</feature>
<feature type="active site" description="Proton donor" evidence="1">
    <location>
        <position position="268"/>
    </location>
</feature>
<feature type="binding site" evidence="1">
    <location>
        <begin position="22"/>
        <end position="23"/>
    </location>
    <ligand>
        <name>NAD(+)</name>
        <dbReference type="ChEBI" id="CHEBI:57540"/>
    </ligand>
</feature>
<feature type="binding site" evidence="1">
    <location>
        <begin position="43"/>
        <end position="44"/>
    </location>
    <ligand>
        <name>NAD(+)</name>
        <dbReference type="ChEBI" id="CHEBI:57540"/>
    </ligand>
</feature>
<feature type="binding site" evidence="1">
    <location>
        <position position="223"/>
    </location>
    <ligand>
        <name>S-adenosyl-L-methionine</name>
        <dbReference type="ChEBI" id="CHEBI:59789"/>
    </ligand>
</feature>
<feature type="binding site" evidence="1">
    <location>
        <begin position="299"/>
        <end position="301"/>
    </location>
    <ligand>
        <name>S-adenosyl-L-methionine</name>
        <dbReference type="ChEBI" id="CHEBI:59789"/>
    </ligand>
</feature>
<feature type="binding site" evidence="1">
    <location>
        <begin position="329"/>
        <end position="330"/>
    </location>
    <ligand>
        <name>S-adenosyl-L-methionine</name>
        <dbReference type="ChEBI" id="CHEBI:59789"/>
    </ligand>
</feature>
<feature type="binding site" evidence="1">
    <location>
        <position position="381"/>
    </location>
    <ligand>
        <name>S-adenosyl-L-methionine</name>
        <dbReference type="ChEBI" id="CHEBI:59789"/>
    </ligand>
</feature>
<feature type="binding site" evidence="1">
    <location>
        <position position="410"/>
    </location>
    <ligand>
        <name>S-adenosyl-L-methionine</name>
        <dbReference type="ChEBI" id="CHEBI:59789"/>
    </ligand>
</feature>
<feature type="modified residue" description="Phosphoserine" evidence="1">
    <location>
        <position position="126"/>
    </location>
</feature>
<keyword id="KW-0169">Cobalamin biosynthesis</keyword>
<keyword id="KW-0456">Lyase</keyword>
<keyword id="KW-0489">Methyltransferase</keyword>
<keyword id="KW-0511">Multifunctional enzyme</keyword>
<keyword id="KW-0520">NAD</keyword>
<keyword id="KW-0560">Oxidoreductase</keyword>
<keyword id="KW-0597">Phosphoprotein</keyword>
<keyword id="KW-0627">Porphyrin biosynthesis</keyword>
<keyword id="KW-1185">Reference proteome</keyword>
<keyword id="KW-0949">S-adenosyl-L-methionine</keyword>
<keyword id="KW-0808">Transferase</keyword>
<protein>
    <recommendedName>
        <fullName evidence="1">Siroheme synthase 2</fullName>
    </recommendedName>
    <domain>
        <recommendedName>
            <fullName evidence="1">Uroporphyrinogen-III C-methyltransferase 2</fullName>
            <shortName evidence="1">Urogen III methylase 2</shortName>
            <ecNumber evidence="1">2.1.1.107</ecNumber>
        </recommendedName>
        <alternativeName>
            <fullName evidence="1">SUMT 2</fullName>
        </alternativeName>
        <alternativeName>
            <fullName evidence="1">Uroporphyrinogen III methylase 2</fullName>
            <shortName evidence="1">UROM 2</shortName>
        </alternativeName>
    </domain>
    <domain>
        <recommendedName>
            <fullName evidence="1">Precorrin-2 dehydrogenase 2</fullName>
            <ecNumber evidence="1">1.3.1.76</ecNumber>
        </recommendedName>
    </domain>
    <domain>
        <recommendedName>
            <fullName evidence="1">Sirohydrochlorin ferrochelatase 2</fullName>
            <ecNumber evidence="1">4.99.1.4</ecNumber>
        </recommendedName>
    </domain>
</protein>
<accession>A0KP37</accession>
<proteinExistence type="inferred from homology"/>
<evidence type="ECO:0000255" key="1">
    <source>
        <dbReference type="HAMAP-Rule" id="MF_01646"/>
    </source>
</evidence>
<comment type="function">
    <text evidence="1">Multifunctional enzyme that catalyzes the SAM-dependent methylations of uroporphyrinogen III at position C-2 and C-7 to form precorrin-2 via precorrin-1. Then it catalyzes the NAD-dependent ring dehydrogenation of precorrin-2 to yield sirohydrochlorin. Finally, it catalyzes the ferrochelation of sirohydrochlorin to yield siroheme.</text>
</comment>
<comment type="catalytic activity">
    <reaction evidence="1">
        <text>uroporphyrinogen III + 2 S-adenosyl-L-methionine = precorrin-2 + 2 S-adenosyl-L-homocysteine + H(+)</text>
        <dbReference type="Rhea" id="RHEA:32459"/>
        <dbReference type="ChEBI" id="CHEBI:15378"/>
        <dbReference type="ChEBI" id="CHEBI:57308"/>
        <dbReference type="ChEBI" id="CHEBI:57856"/>
        <dbReference type="ChEBI" id="CHEBI:58827"/>
        <dbReference type="ChEBI" id="CHEBI:59789"/>
        <dbReference type="EC" id="2.1.1.107"/>
    </reaction>
</comment>
<comment type="catalytic activity">
    <reaction evidence="1">
        <text>precorrin-2 + NAD(+) = sirohydrochlorin + NADH + 2 H(+)</text>
        <dbReference type="Rhea" id="RHEA:15613"/>
        <dbReference type="ChEBI" id="CHEBI:15378"/>
        <dbReference type="ChEBI" id="CHEBI:57540"/>
        <dbReference type="ChEBI" id="CHEBI:57945"/>
        <dbReference type="ChEBI" id="CHEBI:58351"/>
        <dbReference type="ChEBI" id="CHEBI:58827"/>
        <dbReference type="EC" id="1.3.1.76"/>
    </reaction>
</comment>
<comment type="catalytic activity">
    <reaction evidence="1">
        <text>siroheme + 2 H(+) = sirohydrochlorin + Fe(2+)</text>
        <dbReference type="Rhea" id="RHEA:24360"/>
        <dbReference type="ChEBI" id="CHEBI:15378"/>
        <dbReference type="ChEBI" id="CHEBI:29033"/>
        <dbReference type="ChEBI" id="CHEBI:58351"/>
        <dbReference type="ChEBI" id="CHEBI:60052"/>
        <dbReference type="EC" id="4.99.1.4"/>
    </reaction>
</comment>
<comment type="pathway">
    <text evidence="1">Cofactor biosynthesis; adenosylcobalamin biosynthesis; precorrin-2 from uroporphyrinogen III: step 1/1.</text>
</comment>
<comment type="pathway">
    <text evidence="1">Cofactor biosynthesis; adenosylcobalamin biosynthesis; sirohydrochlorin from precorrin-2: step 1/1.</text>
</comment>
<comment type="pathway">
    <text evidence="1">Porphyrin-containing compound metabolism; siroheme biosynthesis; precorrin-2 from uroporphyrinogen III: step 1/1.</text>
</comment>
<comment type="pathway">
    <text evidence="1">Porphyrin-containing compound metabolism; siroheme biosynthesis; siroheme from sirohydrochlorin: step 1/1.</text>
</comment>
<comment type="pathway">
    <text evidence="1">Porphyrin-containing compound metabolism; siroheme biosynthesis; sirohydrochlorin from precorrin-2: step 1/1.</text>
</comment>
<comment type="similarity">
    <text evidence="1">In the N-terminal section; belongs to the precorrin-2 dehydrogenase / sirohydrochlorin ferrochelatase family.</text>
</comment>
<comment type="similarity">
    <text evidence="1">In the C-terminal section; belongs to the precorrin methyltransferase family.</text>
</comment>
<organism>
    <name type="scientific">Aeromonas hydrophila subsp. hydrophila (strain ATCC 7966 / DSM 30187 / BCRC 13018 / CCUG 14551 / JCM 1027 / KCTC 2358 / NCIMB 9240 / NCTC 8049)</name>
    <dbReference type="NCBI Taxonomy" id="380703"/>
    <lineage>
        <taxon>Bacteria</taxon>
        <taxon>Pseudomonadati</taxon>
        <taxon>Pseudomonadota</taxon>
        <taxon>Gammaproteobacteria</taxon>
        <taxon>Aeromonadales</taxon>
        <taxon>Aeromonadaceae</taxon>
        <taxon>Aeromonas</taxon>
    </lineage>
</organism>
<reference key="1">
    <citation type="journal article" date="2006" name="J. Bacteriol.">
        <title>Genome sequence of Aeromonas hydrophila ATCC 7966T: jack of all trades.</title>
        <authorList>
            <person name="Seshadri R."/>
            <person name="Joseph S.W."/>
            <person name="Chopra A.K."/>
            <person name="Sha J."/>
            <person name="Shaw J."/>
            <person name="Graf J."/>
            <person name="Haft D.H."/>
            <person name="Wu M."/>
            <person name="Ren Q."/>
            <person name="Rosovitz M.J."/>
            <person name="Madupu R."/>
            <person name="Tallon L."/>
            <person name="Kim M."/>
            <person name="Jin S."/>
            <person name="Vuong H."/>
            <person name="Stine O.C."/>
            <person name="Ali A."/>
            <person name="Horneman A.J."/>
            <person name="Heidelberg J.F."/>
        </authorList>
    </citation>
    <scope>NUCLEOTIDE SEQUENCE [LARGE SCALE GENOMIC DNA]</scope>
    <source>
        <strain>ATCC 7966 / DSM 30187 / BCRC 13018 / CCUG 14551 / JCM 1027 / KCTC 2358 / NCIMB 9240 / NCTC 8049</strain>
    </source>
</reference>
<sequence>MDYLPMFAKLDGRPVLLVGGGEVALRKARLLLAAGARLTLVSPELEPDFHQFADRFTHLAERFTPAHLTGQILVVAATDDLEVNALVYQSANQLGLFVNVVDDPKRSSFIFPSIIDRSPIMVAVSSGGKAPVLVRLLRERLESLLPRHLGALAELSGRVRDQAKRVLSSISDRRRFWERAFASNTLAGLIEKEDWQGAEQWLNDGLDQAKNEVGEVVLVGAGPGDPGLLTLKALQQIQQAEVVLYDQLVSPEILDLVRRDATLVSVGKKAGAHSVPQEETNRLLVEYAKAGNRVVRLKGGDPFMFGRGGEELEVLAEEGIPFSVVPGITAAAGATAYAGIPLTHRDHAQSAVFITGHCQIDGKEPDWQQLAATSQTLVIYMGLMRSEHIQQQLVSHGRSSATPIAIIERGTTARQRVLTGTLADLAELAAQAVSPSLIVIGEVVALRERLAWFGEGQQQGTCDLKLVSLA</sequence>
<dbReference type="EC" id="2.1.1.107" evidence="1"/>
<dbReference type="EC" id="1.3.1.76" evidence="1"/>
<dbReference type="EC" id="4.99.1.4" evidence="1"/>
<dbReference type="EMBL" id="CP000462">
    <property type="protein sequence ID" value="ABK38644.1"/>
    <property type="molecule type" value="Genomic_DNA"/>
</dbReference>
<dbReference type="RefSeq" id="WP_011707310.1">
    <property type="nucleotide sequence ID" value="NC_008570.1"/>
</dbReference>
<dbReference type="RefSeq" id="YP_858038.1">
    <property type="nucleotide sequence ID" value="NC_008570.1"/>
</dbReference>
<dbReference type="SMR" id="A0KP37"/>
<dbReference type="STRING" id="380703.AHA_3568"/>
<dbReference type="EnsemblBacteria" id="ABK38644">
    <property type="protein sequence ID" value="ABK38644"/>
    <property type="gene ID" value="AHA_3568"/>
</dbReference>
<dbReference type="GeneID" id="4488263"/>
<dbReference type="KEGG" id="aha:AHA_3568"/>
<dbReference type="PATRIC" id="fig|380703.7.peg.3555"/>
<dbReference type="eggNOG" id="COG0007">
    <property type="taxonomic scope" value="Bacteria"/>
</dbReference>
<dbReference type="eggNOG" id="COG1648">
    <property type="taxonomic scope" value="Bacteria"/>
</dbReference>
<dbReference type="HOGENOM" id="CLU_011276_2_0_6"/>
<dbReference type="OrthoDB" id="9815856at2"/>
<dbReference type="UniPathway" id="UPA00148">
    <property type="reaction ID" value="UER00211"/>
</dbReference>
<dbReference type="UniPathway" id="UPA00148">
    <property type="reaction ID" value="UER00222"/>
</dbReference>
<dbReference type="UniPathway" id="UPA00262">
    <property type="reaction ID" value="UER00211"/>
</dbReference>
<dbReference type="UniPathway" id="UPA00262">
    <property type="reaction ID" value="UER00222"/>
</dbReference>
<dbReference type="UniPathway" id="UPA00262">
    <property type="reaction ID" value="UER00376"/>
</dbReference>
<dbReference type="Proteomes" id="UP000000756">
    <property type="component" value="Chromosome"/>
</dbReference>
<dbReference type="GO" id="GO:0051287">
    <property type="term" value="F:NAD binding"/>
    <property type="evidence" value="ECO:0007669"/>
    <property type="project" value="InterPro"/>
</dbReference>
<dbReference type="GO" id="GO:0043115">
    <property type="term" value="F:precorrin-2 dehydrogenase activity"/>
    <property type="evidence" value="ECO:0007669"/>
    <property type="project" value="UniProtKB-UniRule"/>
</dbReference>
<dbReference type="GO" id="GO:0051266">
    <property type="term" value="F:sirohydrochlorin ferrochelatase activity"/>
    <property type="evidence" value="ECO:0007669"/>
    <property type="project" value="UniProtKB-EC"/>
</dbReference>
<dbReference type="GO" id="GO:0004851">
    <property type="term" value="F:uroporphyrin-III C-methyltransferase activity"/>
    <property type="evidence" value="ECO:0007669"/>
    <property type="project" value="UniProtKB-UniRule"/>
</dbReference>
<dbReference type="GO" id="GO:0009236">
    <property type="term" value="P:cobalamin biosynthetic process"/>
    <property type="evidence" value="ECO:0007669"/>
    <property type="project" value="UniProtKB-UniRule"/>
</dbReference>
<dbReference type="GO" id="GO:0032259">
    <property type="term" value="P:methylation"/>
    <property type="evidence" value="ECO:0007669"/>
    <property type="project" value="UniProtKB-KW"/>
</dbReference>
<dbReference type="GO" id="GO:0019354">
    <property type="term" value="P:siroheme biosynthetic process"/>
    <property type="evidence" value="ECO:0007669"/>
    <property type="project" value="UniProtKB-UniRule"/>
</dbReference>
<dbReference type="CDD" id="cd11642">
    <property type="entry name" value="SUMT"/>
    <property type="match status" value="1"/>
</dbReference>
<dbReference type="FunFam" id="3.30.160.110:FF:000001">
    <property type="entry name" value="Siroheme synthase"/>
    <property type="match status" value="1"/>
</dbReference>
<dbReference type="FunFam" id="3.30.950.10:FF:000001">
    <property type="entry name" value="Siroheme synthase"/>
    <property type="match status" value="1"/>
</dbReference>
<dbReference type="FunFam" id="3.40.1010.10:FF:000001">
    <property type="entry name" value="Siroheme synthase"/>
    <property type="match status" value="1"/>
</dbReference>
<dbReference type="Gene3D" id="3.40.1010.10">
    <property type="entry name" value="Cobalt-precorrin-4 Transmethylase, Domain 1"/>
    <property type="match status" value="1"/>
</dbReference>
<dbReference type="Gene3D" id="3.30.950.10">
    <property type="entry name" value="Methyltransferase, Cobalt-precorrin-4 Transmethylase, Domain 2"/>
    <property type="match status" value="1"/>
</dbReference>
<dbReference type="Gene3D" id="3.40.50.720">
    <property type="entry name" value="NAD(P)-binding Rossmann-like Domain"/>
    <property type="match status" value="1"/>
</dbReference>
<dbReference type="Gene3D" id="1.10.8.210">
    <property type="entry name" value="Sirohaem synthase, dimerisation domain"/>
    <property type="match status" value="1"/>
</dbReference>
<dbReference type="Gene3D" id="3.30.160.110">
    <property type="entry name" value="Siroheme synthase, domain 2"/>
    <property type="match status" value="1"/>
</dbReference>
<dbReference type="HAMAP" id="MF_01646">
    <property type="entry name" value="Siroheme_synth"/>
    <property type="match status" value="1"/>
</dbReference>
<dbReference type="InterPro" id="IPR000878">
    <property type="entry name" value="4pyrrol_Mease"/>
</dbReference>
<dbReference type="InterPro" id="IPR035996">
    <property type="entry name" value="4pyrrol_Methylase_sf"/>
</dbReference>
<dbReference type="InterPro" id="IPR014777">
    <property type="entry name" value="4pyrrole_Mease_sub1"/>
</dbReference>
<dbReference type="InterPro" id="IPR014776">
    <property type="entry name" value="4pyrrole_Mease_sub2"/>
</dbReference>
<dbReference type="InterPro" id="IPR006366">
    <property type="entry name" value="CobA/CysG_C"/>
</dbReference>
<dbReference type="InterPro" id="IPR036291">
    <property type="entry name" value="NAD(P)-bd_dom_sf"/>
</dbReference>
<dbReference type="InterPro" id="IPR050161">
    <property type="entry name" value="Siro_Cobalamin_biosynth"/>
</dbReference>
<dbReference type="InterPro" id="IPR037115">
    <property type="entry name" value="Sirohaem_synt_dimer_dom_sf"/>
</dbReference>
<dbReference type="InterPro" id="IPR012409">
    <property type="entry name" value="Sirohaem_synth"/>
</dbReference>
<dbReference type="InterPro" id="IPR028281">
    <property type="entry name" value="Sirohaem_synthase_central"/>
</dbReference>
<dbReference type="InterPro" id="IPR019478">
    <property type="entry name" value="Sirohaem_synthase_dimer_dom"/>
</dbReference>
<dbReference type="InterPro" id="IPR006367">
    <property type="entry name" value="Sirohaem_synthase_N"/>
</dbReference>
<dbReference type="InterPro" id="IPR003043">
    <property type="entry name" value="Uropor_MeTrfase_CS"/>
</dbReference>
<dbReference type="NCBIfam" id="TIGR01469">
    <property type="entry name" value="cobA_cysG_Cterm"/>
    <property type="match status" value="1"/>
</dbReference>
<dbReference type="NCBIfam" id="TIGR01470">
    <property type="entry name" value="cysG_Nterm"/>
    <property type="match status" value="1"/>
</dbReference>
<dbReference type="NCBIfam" id="NF004790">
    <property type="entry name" value="PRK06136.1"/>
    <property type="match status" value="1"/>
</dbReference>
<dbReference type="NCBIfam" id="NF007922">
    <property type="entry name" value="PRK10637.1"/>
    <property type="match status" value="1"/>
</dbReference>
<dbReference type="PANTHER" id="PTHR45790:SF1">
    <property type="entry name" value="SIROHEME SYNTHASE"/>
    <property type="match status" value="1"/>
</dbReference>
<dbReference type="PANTHER" id="PTHR45790">
    <property type="entry name" value="SIROHEME SYNTHASE-RELATED"/>
    <property type="match status" value="1"/>
</dbReference>
<dbReference type="Pfam" id="PF10414">
    <property type="entry name" value="CysG_dimeriser"/>
    <property type="match status" value="1"/>
</dbReference>
<dbReference type="Pfam" id="PF13241">
    <property type="entry name" value="NAD_binding_7"/>
    <property type="match status" value="1"/>
</dbReference>
<dbReference type="Pfam" id="PF14824">
    <property type="entry name" value="Sirohm_synth_M"/>
    <property type="match status" value="1"/>
</dbReference>
<dbReference type="Pfam" id="PF00590">
    <property type="entry name" value="TP_methylase"/>
    <property type="match status" value="1"/>
</dbReference>
<dbReference type="PIRSF" id="PIRSF036426">
    <property type="entry name" value="Sirohaem_synth"/>
    <property type="match status" value="1"/>
</dbReference>
<dbReference type="SUPFAM" id="SSF51735">
    <property type="entry name" value="NAD(P)-binding Rossmann-fold domains"/>
    <property type="match status" value="1"/>
</dbReference>
<dbReference type="SUPFAM" id="SSF75615">
    <property type="entry name" value="Siroheme synthase middle domains-like"/>
    <property type="match status" value="1"/>
</dbReference>
<dbReference type="SUPFAM" id="SSF53790">
    <property type="entry name" value="Tetrapyrrole methylase"/>
    <property type="match status" value="1"/>
</dbReference>
<dbReference type="PROSITE" id="PS00839">
    <property type="entry name" value="SUMT_1"/>
    <property type="match status" value="1"/>
</dbReference>
<dbReference type="PROSITE" id="PS00840">
    <property type="entry name" value="SUMT_2"/>
    <property type="match status" value="1"/>
</dbReference>